<name>ISPF_XANCP</name>
<feature type="chain" id="PRO_0000189520" description="2-C-methyl-D-erythritol 2,4-cyclodiphosphate synthase">
    <location>
        <begin position="1"/>
        <end position="163"/>
    </location>
</feature>
<feature type="binding site" evidence="1">
    <location>
        <begin position="12"/>
        <end position="14"/>
    </location>
    <ligand>
        <name>4-CDP-2-C-methyl-D-erythritol 2-phosphate</name>
        <dbReference type="ChEBI" id="CHEBI:57919"/>
    </ligand>
</feature>
<feature type="binding site" evidence="1">
    <location>
        <position position="12"/>
    </location>
    <ligand>
        <name>a divalent metal cation</name>
        <dbReference type="ChEBI" id="CHEBI:60240"/>
    </ligand>
</feature>
<feature type="binding site" evidence="1">
    <location>
        <position position="14"/>
    </location>
    <ligand>
        <name>a divalent metal cation</name>
        <dbReference type="ChEBI" id="CHEBI:60240"/>
    </ligand>
</feature>
<feature type="binding site" evidence="1">
    <location>
        <begin position="38"/>
        <end position="39"/>
    </location>
    <ligand>
        <name>4-CDP-2-C-methyl-D-erythritol 2-phosphate</name>
        <dbReference type="ChEBI" id="CHEBI:57919"/>
    </ligand>
</feature>
<feature type="binding site" evidence="1">
    <location>
        <position position="46"/>
    </location>
    <ligand>
        <name>a divalent metal cation</name>
        <dbReference type="ChEBI" id="CHEBI:60240"/>
    </ligand>
</feature>
<feature type="binding site" evidence="1">
    <location>
        <begin position="60"/>
        <end position="62"/>
    </location>
    <ligand>
        <name>4-CDP-2-C-methyl-D-erythritol 2-phosphate</name>
        <dbReference type="ChEBI" id="CHEBI:57919"/>
    </ligand>
</feature>
<feature type="binding site" evidence="1">
    <location>
        <begin position="136"/>
        <end position="139"/>
    </location>
    <ligand>
        <name>4-CDP-2-C-methyl-D-erythritol 2-phosphate</name>
        <dbReference type="ChEBI" id="CHEBI:57919"/>
    </ligand>
</feature>
<feature type="binding site" evidence="1">
    <location>
        <position position="143"/>
    </location>
    <ligand>
        <name>4-CDP-2-C-methyl-D-erythritol 2-phosphate</name>
        <dbReference type="ChEBI" id="CHEBI:57919"/>
    </ligand>
</feature>
<feature type="binding site" evidence="1">
    <location>
        <position position="146"/>
    </location>
    <ligand>
        <name>4-CDP-2-C-methyl-D-erythritol 2-phosphate</name>
        <dbReference type="ChEBI" id="CHEBI:57919"/>
    </ligand>
</feature>
<feature type="site" description="Transition state stabilizer" evidence="1">
    <location>
        <position position="38"/>
    </location>
</feature>
<feature type="site" description="Transition state stabilizer" evidence="1">
    <location>
        <position position="137"/>
    </location>
</feature>
<accession>Q8P9Z0</accession>
<dbReference type="EC" id="4.6.1.12" evidence="1"/>
<dbReference type="EMBL" id="AE008922">
    <property type="protein sequence ID" value="AAM40997.1"/>
    <property type="molecule type" value="Genomic_DNA"/>
</dbReference>
<dbReference type="RefSeq" id="NP_637073.1">
    <property type="nucleotide sequence ID" value="NC_003902.1"/>
</dbReference>
<dbReference type="RefSeq" id="WP_011036880.1">
    <property type="nucleotide sequence ID" value="NC_003902.1"/>
</dbReference>
<dbReference type="SMR" id="Q8P9Z0"/>
<dbReference type="STRING" id="190485.XCC1703"/>
<dbReference type="EnsemblBacteria" id="AAM40997">
    <property type="protein sequence ID" value="AAM40997"/>
    <property type="gene ID" value="XCC1703"/>
</dbReference>
<dbReference type="KEGG" id="xcc:XCC1703"/>
<dbReference type="PATRIC" id="fig|190485.4.peg.1815"/>
<dbReference type="eggNOG" id="COG0245">
    <property type="taxonomic scope" value="Bacteria"/>
</dbReference>
<dbReference type="HOGENOM" id="CLU_084630_2_0_6"/>
<dbReference type="OrthoDB" id="9804336at2"/>
<dbReference type="UniPathway" id="UPA00056">
    <property type="reaction ID" value="UER00095"/>
</dbReference>
<dbReference type="Proteomes" id="UP000001010">
    <property type="component" value="Chromosome"/>
</dbReference>
<dbReference type="GO" id="GO:0008685">
    <property type="term" value="F:2-C-methyl-D-erythritol 2,4-cyclodiphosphate synthase activity"/>
    <property type="evidence" value="ECO:0000318"/>
    <property type="project" value="GO_Central"/>
</dbReference>
<dbReference type="GO" id="GO:0046872">
    <property type="term" value="F:metal ion binding"/>
    <property type="evidence" value="ECO:0007669"/>
    <property type="project" value="UniProtKB-KW"/>
</dbReference>
<dbReference type="GO" id="GO:0019288">
    <property type="term" value="P:isopentenyl diphosphate biosynthetic process, methylerythritol 4-phosphate pathway"/>
    <property type="evidence" value="ECO:0007669"/>
    <property type="project" value="UniProtKB-UniRule"/>
</dbReference>
<dbReference type="GO" id="GO:0016114">
    <property type="term" value="P:terpenoid biosynthetic process"/>
    <property type="evidence" value="ECO:0007669"/>
    <property type="project" value="InterPro"/>
</dbReference>
<dbReference type="CDD" id="cd00554">
    <property type="entry name" value="MECDP_synthase"/>
    <property type="match status" value="1"/>
</dbReference>
<dbReference type="FunFam" id="3.30.1330.50:FF:000001">
    <property type="entry name" value="2-C-methyl-D-erythritol 2,4-cyclodiphosphate synthase"/>
    <property type="match status" value="1"/>
</dbReference>
<dbReference type="Gene3D" id="3.30.1330.50">
    <property type="entry name" value="2-C-methyl-D-erythritol 2,4-cyclodiphosphate synthase"/>
    <property type="match status" value="1"/>
</dbReference>
<dbReference type="HAMAP" id="MF_00107">
    <property type="entry name" value="IspF"/>
    <property type="match status" value="1"/>
</dbReference>
<dbReference type="InterPro" id="IPR003526">
    <property type="entry name" value="MECDP_synthase"/>
</dbReference>
<dbReference type="InterPro" id="IPR020555">
    <property type="entry name" value="MECDP_synthase_CS"/>
</dbReference>
<dbReference type="InterPro" id="IPR036571">
    <property type="entry name" value="MECDP_synthase_sf"/>
</dbReference>
<dbReference type="NCBIfam" id="TIGR00151">
    <property type="entry name" value="ispF"/>
    <property type="match status" value="1"/>
</dbReference>
<dbReference type="PANTHER" id="PTHR43181">
    <property type="entry name" value="2-C-METHYL-D-ERYTHRITOL 2,4-CYCLODIPHOSPHATE SYNTHASE, CHLOROPLASTIC"/>
    <property type="match status" value="1"/>
</dbReference>
<dbReference type="PANTHER" id="PTHR43181:SF1">
    <property type="entry name" value="2-C-METHYL-D-ERYTHRITOL 2,4-CYCLODIPHOSPHATE SYNTHASE, CHLOROPLASTIC"/>
    <property type="match status" value="1"/>
</dbReference>
<dbReference type="Pfam" id="PF02542">
    <property type="entry name" value="YgbB"/>
    <property type="match status" value="1"/>
</dbReference>
<dbReference type="SUPFAM" id="SSF69765">
    <property type="entry name" value="IpsF-like"/>
    <property type="match status" value="1"/>
</dbReference>
<dbReference type="PROSITE" id="PS01350">
    <property type="entry name" value="ISPF"/>
    <property type="match status" value="1"/>
</dbReference>
<comment type="function">
    <text evidence="1">Involved in the biosynthesis of isopentenyl diphosphate (IPP) and dimethylallyl diphosphate (DMAPP), two major building blocks of isoprenoid compounds. Catalyzes the conversion of 4-diphosphocytidyl-2-C-methyl-D-erythritol 2-phosphate (CDP-ME2P) to 2-C-methyl-D-erythritol 2,4-cyclodiphosphate (ME-CPP) with a corresponding release of cytidine 5-monophosphate (CMP).</text>
</comment>
<comment type="catalytic activity">
    <reaction evidence="1">
        <text>4-CDP-2-C-methyl-D-erythritol 2-phosphate = 2-C-methyl-D-erythritol 2,4-cyclic diphosphate + CMP</text>
        <dbReference type="Rhea" id="RHEA:23864"/>
        <dbReference type="ChEBI" id="CHEBI:57919"/>
        <dbReference type="ChEBI" id="CHEBI:58483"/>
        <dbReference type="ChEBI" id="CHEBI:60377"/>
        <dbReference type="EC" id="4.6.1.12"/>
    </reaction>
</comment>
<comment type="cofactor">
    <cofactor evidence="1">
        <name>a divalent metal cation</name>
        <dbReference type="ChEBI" id="CHEBI:60240"/>
    </cofactor>
    <text evidence="1">Binds 1 divalent metal cation per subunit.</text>
</comment>
<comment type="pathway">
    <text evidence="1">Isoprenoid biosynthesis; isopentenyl diphosphate biosynthesis via DXP pathway; isopentenyl diphosphate from 1-deoxy-D-xylulose 5-phosphate: step 4/6.</text>
</comment>
<comment type="subunit">
    <text evidence="1">Homotrimer.</text>
</comment>
<comment type="similarity">
    <text evidence="1">Belongs to the IspF family.</text>
</comment>
<sequence length="163" mass="17201">MSFNFRIGQGYDVHAFGPGDHLMLGGVRMAHSHGVLAHSDGDVVLHALCDAMLGGLALGDIGVHFPPSDARWKGADSAQFVQHCDQLLRDRGWRVGNADITVICERPKVGPHALAMRERIAGLLAIELDAVSVKATTSEKLGFTGRSEGIAAQAAVLLGKIAA</sequence>
<gene>
    <name evidence="1" type="primary">ispF</name>
    <name type="ordered locus">XCC1703</name>
</gene>
<evidence type="ECO:0000255" key="1">
    <source>
        <dbReference type="HAMAP-Rule" id="MF_00107"/>
    </source>
</evidence>
<organism>
    <name type="scientific">Xanthomonas campestris pv. campestris (strain ATCC 33913 / DSM 3586 / NCPPB 528 / LMG 568 / P 25)</name>
    <dbReference type="NCBI Taxonomy" id="190485"/>
    <lineage>
        <taxon>Bacteria</taxon>
        <taxon>Pseudomonadati</taxon>
        <taxon>Pseudomonadota</taxon>
        <taxon>Gammaproteobacteria</taxon>
        <taxon>Lysobacterales</taxon>
        <taxon>Lysobacteraceae</taxon>
        <taxon>Xanthomonas</taxon>
    </lineage>
</organism>
<proteinExistence type="inferred from homology"/>
<protein>
    <recommendedName>
        <fullName evidence="1">2-C-methyl-D-erythritol 2,4-cyclodiphosphate synthase</fullName>
        <shortName evidence="1">MECDP-synthase</shortName>
        <shortName evidence="1">MECPP-synthase</shortName>
        <shortName evidence="1">MECPS</shortName>
        <ecNumber evidence="1">4.6.1.12</ecNumber>
    </recommendedName>
</protein>
<keyword id="KW-0414">Isoprene biosynthesis</keyword>
<keyword id="KW-0456">Lyase</keyword>
<keyword id="KW-0479">Metal-binding</keyword>
<keyword id="KW-1185">Reference proteome</keyword>
<reference key="1">
    <citation type="journal article" date="2002" name="Nature">
        <title>Comparison of the genomes of two Xanthomonas pathogens with differing host specificities.</title>
        <authorList>
            <person name="da Silva A.C.R."/>
            <person name="Ferro J.A."/>
            <person name="Reinach F.C."/>
            <person name="Farah C.S."/>
            <person name="Furlan L.R."/>
            <person name="Quaggio R.B."/>
            <person name="Monteiro-Vitorello C.B."/>
            <person name="Van Sluys M.A."/>
            <person name="Almeida N.F. Jr."/>
            <person name="Alves L.M.C."/>
            <person name="do Amaral A.M."/>
            <person name="Bertolini M.C."/>
            <person name="Camargo L.E.A."/>
            <person name="Camarotte G."/>
            <person name="Cannavan F."/>
            <person name="Cardozo J."/>
            <person name="Chambergo F."/>
            <person name="Ciapina L.P."/>
            <person name="Cicarelli R.M.B."/>
            <person name="Coutinho L.L."/>
            <person name="Cursino-Santos J.R."/>
            <person name="El-Dorry H."/>
            <person name="Faria J.B."/>
            <person name="Ferreira A.J.S."/>
            <person name="Ferreira R.C.C."/>
            <person name="Ferro M.I.T."/>
            <person name="Formighieri E.F."/>
            <person name="Franco M.C."/>
            <person name="Greggio C.C."/>
            <person name="Gruber A."/>
            <person name="Katsuyama A.M."/>
            <person name="Kishi L.T."/>
            <person name="Leite R.P."/>
            <person name="Lemos E.G.M."/>
            <person name="Lemos M.V.F."/>
            <person name="Locali E.C."/>
            <person name="Machado M.A."/>
            <person name="Madeira A.M.B.N."/>
            <person name="Martinez-Rossi N.M."/>
            <person name="Martins E.C."/>
            <person name="Meidanis J."/>
            <person name="Menck C.F.M."/>
            <person name="Miyaki C.Y."/>
            <person name="Moon D.H."/>
            <person name="Moreira L.M."/>
            <person name="Novo M.T.M."/>
            <person name="Okura V.K."/>
            <person name="Oliveira M.C."/>
            <person name="Oliveira V.R."/>
            <person name="Pereira H.A."/>
            <person name="Rossi A."/>
            <person name="Sena J.A.D."/>
            <person name="Silva C."/>
            <person name="de Souza R.F."/>
            <person name="Spinola L.A.F."/>
            <person name="Takita M.A."/>
            <person name="Tamura R.E."/>
            <person name="Teixeira E.C."/>
            <person name="Tezza R.I.D."/>
            <person name="Trindade dos Santos M."/>
            <person name="Truffi D."/>
            <person name="Tsai S.M."/>
            <person name="White F.F."/>
            <person name="Setubal J.C."/>
            <person name="Kitajima J.P."/>
        </authorList>
    </citation>
    <scope>NUCLEOTIDE SEQUENCE [LARGE SCALE GENOMIC DNA]</scope>
    <source>
        <strain>ATCC 33913 / DSM 3586 / NCPPB 528 / LMG 568 / P 25</strain>
    </source>
</reference>